<dbReference type="EMBL" id="LT708304">
    <property type="protein sequence ID" value="SIU00922.1"/>
    <property type="molecule type" value="Genomic_DNA"/>
</dbReference>
<dbReference type="RefSeq" id="NP_855959.1">
    <property type="nucleotide sequence ID" value="NC_002945.3"/>
</dbReference>
<dbReference type="RefSeq" id="WP_003900492.1">
    <property type="nucleotide sequence ID" value="NC_002945.4"/>
</dbReference>
<dbReference type="KEGG" id="mbo:BQ2027_MB2310"/>
<dbReference type="Proteomes" id="UP000001419">
    <property type="component" value="Chromosome"/>
</dbReference>
<feature type="chain" id="PRO_0000104008" description="Uncharacterized protein Mb2310">
    <location>
        <begin position="1"/>
        <end position="125"/>
    </location>
</feature>
<gene>
    <name type="ordered locus">BQ2027_MB2310</name>
</gene>
<organism>
    <name type="scientific">Mycobacterium bovis (strain ATCC BAA-935 / AF2122/97)</name>
    <dbReference type="NCBI Taxonomy" id="233413"/>
    <lineage>
        <taxon>Bacteria</taxon>
        <taxon>Bacillati</taxon>
        <taxon>Actinomycetota</taxon>
        <taxon>Actinomycetes</taxon>
        <taxon>Mycobacteriales</taxon>
        <taxon>Mycobacteriaceae</taxon>
        <taxon>Mycobacterium</taxon>
        <taxon>Mycobacterium tuberculosis complex</taxon>
    </lineage>
</organism>
<accession>P64976</accession>
<accession>A0A1R3Y0T2</accession>
<accession>Q50677</accession>
<accession>X2BKN7</accession>
<reference key="1">
    <citation type="journal article" date="2003" name="Proc. Natl. Acad. Sci. U.S.A.">
        <title>The complete genome sequence of Mycobacterium bovis.</title>
        <authorList>
            <person name="Garnier T."/>
            <person name="Eiglmeier K."/>
            <person name="Camus J.-C."/>
            <person name="Medina N."/>
            <person name="Mansoor H."/>
            <person name="Pryor M."/>
            <person name="Duthoy S."/>
            <person name="Grondin S."/>
            <person name="Lacroix C."/>
            <person name="Monsempe C."/>
            <person name="Simon S."/>
            <person name="Harris B."/>
            <person name="Atkin R."/>
            <person name="Doggett J."/>
            <person name="Mayes R."/>
            <person name="Keating L."/>
            <person name="Wheeler P.R."/>
            <person name="Parkhill J."/>
            <person name="Barrell B.G."/>
            <person name="Cole S.T."/>
            <person name="Gordon S.V."/>
            <person name="Hewinson R.G."/>
        </authorList>
    </citation>
    <scope>NUCLEOTIDE SEQUENCE [LARGE SCALE GENOMIC DNA]</scope>
    <source>
        <strain>ATCC BAA-935 / AF2122/97</strain>
    </source>
</reference>
<reference key="2">
    <citation type="journal article" date="2017" name="Genome Announc.">
        <title>Updated reference genome sequence and annotation of Mycobacterium bovis AF2122/97.</title>
        <authorList>
            <person name="Malone K.M."/>
            <person name="Farrell D."/>
            <person name="Stuber T.P."/>
            <person name="Schubert O.T."/>
            <person name="Aebersold R."/>
            <person name="Robbe-Austerman S."/>
            <person name="Gordon S.V."/>
        </authorList>
    </citation>
    <scope>NUCLEOTIDE SEQUENCE [LARGE SCALE GENOMIC DNA]</scope>
    <scope>GENOME REANNOTATION</scope>
    <source>
        <strain>ATCC BAA-935 / AF2122/97</strain>
    </source>
</reference>
<name>Y2310_MYCBO</name>
<proteinExistence type="predicted"/>
<sequence length="125" mass="14167">MSRRRPLIEPATVQVLAIAFTDSFSVSLHWPQREQGCRTAILAPMRRWCDGDVDGRKLLPPARRTGTQQRRIRPAAPRVYTTGDILRDRKGIAPWQEQREPGWAPFGWLHEPSGARCPKADGQSV</sequence>
<keyword id="KW-1185">Reference proteome</keyword>
<protein>
    <recommendedName>
        <fullName>Uncharacterized protein Mb2310</fullName>
    </recommendedName>
</protein>